<organism>
    <name type="scientific">Aspergillus fumigatus (strain ATCC MYA-4609 / CBS 101355 / FGSC A1100 / Af293)</name>
    <name type="common">Neosartorya fumigata</name>
    <dbReference type="NCBI Taxonomy" id="330879"/>
    <lineage>
        <taxon>Eukaryota</taxon>
        <taxon>Fungi</taxon>
        <taxon>Dikarya</taxon>
        <taxon>Ascomycota</taxon>
        <taxon>Pezizomycotina</taxon>
        <taxon>Eurotiomycetes</taxon>
        <taxon>Eurotiomycetidae</taxon>
        <taxon>Eurotiales</taxon>
        <taxon>Aspergillaceae</taxon>
        <taxon>Aspergillus</taxon>
        <taxon>Aspergillus subgen. Fumigati</taxon>
    </lineage>
</organism>
<evidence type="ECO:0000250" key="1"/>
<evidence type="ECO:0000255" key="2"/>
<evidence type="ECO:0000256" key="3">
    <source>
        <dbReference type="SAM" id="MobiDB-lite"/>
    </source>
</evidence>
<evidence type="ECO:0000305" key="4"/>
<sequence length="621" mass="68763">MPSADGSSSARPNGTSSRSDQLAWYKSQYEQLEAELADFQASSRELEAELEKDIEASEKRERLLKEKVDSLKYEVEEWKVRLEFTTFIADDGPRANLSLPRQTKYKQSKAEGNSAQNTLQKEITTLRDANRTLQLKLRDIEVANDDYERQARHTTSSLEDLESKYNVAIERAVLLEEEMRAGEQEREKLRIENQRLRDELSDLKIETEIIHEKLRNAELQNSRRRKPISLRSPSTPQTPDLFNRSPASSIVSSPLFSTPTLKTSLMSATATPPSPPISESSSSLRKSMNAMPGFPLQKASASDSSFGSRSLHGSRTQKHNNHSRATSYAFTSNRPTPSVTNRPGLPKPKPKPNENTNKHNNNARSSGLPKSGSLYQIRGLIGKMQKLEERVQSAKSKLPPPSDSPSRTSSRSGSILGESPVASTITARRNSRKRLSGSSFSSSVRDGDSVPSYAPHSRPSFGARTQGDSRPSSRTSYSSHSSVSHSTHPSVTPSTRPESRQSRTKTPLGHYSTNPTTESRRPRSSLSNPSNQNGVVNGMAHIDEDEDLAMHMSLRARISEIRETRLPSISTPTGLKKRTPSGISGIPAPRTLRTSTGFDRLEGDMGPPERKSNITDLGETY</sequence>
<feature type="chain" id="PRO_0000240222" description="Nuclear distribution protein nudE homolog 1">
    <location>
        <begin position="1"/>
        <end position="621"/>
    </location>
</feature>
<feature type="region of interest" description="Disordered" evidence="3">
    <location>
        <begin position="1"/>
        <end position="21"/>
    </location>
</feature>
<feature type="region of interest" description="Disordered" evidence="3">
    <location>
        <begin position="218"/>
        <end position="372"/>
    </location>
</feature>
<feature type="region of interest" description="Disordered" evidence="3">
    <location>
        <begin position="389"/>
        <end position="537"/>
    </location>
</feature>
<feature type="region of interest" description="Disordered" evidence="3">
    <location>
        <begin position="569"/>
        <end position="621"/>
    </location>
</feature>
<feature type="coiled-coil region" evidence="2">
    <location>
        <begin position="18"/>
        <end position="219"/>
    </location>
</feature>
<feature type="compositionally biased region" description="Polar residues" evidence="3">
    <location>
        <begin position="1"/>
        <end position="20"/>
    </location>
</feature>
<feature type="compositionally biased region" description="Polar residues" evidence="3">
    <location>
        <begin position="231"/>
        <end position="263"/>
    </location>
</feature>
<feature type="compositionally biased region" description="Low complexity" evidence="3">
    <location>
        <begin position="264"/>
        <end position="288"/>
    </location>
</feature>
<feature type="compositionally biased region" description="Low complexity" evidence="3">
    <location>
        <begin position="300"/>
        <end position="310"/>
    </location>
</feature>
<feature type="compositionally biased region" description="Polar residues" evidence="3">
    <location>
        <begin position="323"/>
        <end position="341"/>
    </location>
</feature>
<feature type="compositionally biased region" description="Low complexity" evidence="3">
    <location>
        <begin position="353"/>
        <end position="362"/>
    </location>
</feature>
<feature type="compositionally biased region" description="Low complexity" evidence="3">
    <location>
        <begin position="404"/>
        <end position="414"/>
    </location>
</feature>
<feature type="compositionally biased region" description="Low complexity" evidence="3">
    <location>
        <begin position="469"/>
        <end position="496"/>
    </location>
</feature>
<feature type="compositionally biased region" description="Basic and acidic residues" evidence="3">
    <location>
        <begin position="599"/>
        <end position="613"/>
    </location>
</feature>
<reference key="1">
    <citation type="journal article" date="2005" name="Nature">
        <title>Genomic sequence of the pathogenic and allergenic filamentous fungus Aspergillus fumigatus.</title>
        <authorList>
            <person name="Nierman W.C."/>
            <person name="Pain A."/>
            <person name="Anderson M.J."/>
            <person name="Wortman J.R."/>
            <person name="Kim H.S."/>
            <person name="Arroyo J."/>
            <person name="Berriman M."/>
            <person name="Abe K."/>
            <person name="Archer D.B."/>
            <person name="Bermejo C."/>
            <person name="Bennett J.W."/>
            <person name="Bowyer P."/>
            <person name="Chen D."/>
            <person name="Collins M."/>
            <person name="Coulsen R."/>
            <person name="Davies R."/>
            <person name="Dyer P.S."/>
            <person name="Farman M.L."/>
            <person name="Fedorova N."/>
            <person name="Fedorova N.D."/>
            <person name="Feldblyum T.V."/>
            <person name="Fischer R."/>
            <person name="Fosker N."/>
            <person name="Fraser A."/>
            <person name="Garcia J.L."/>
            <person name="Garcia M.J."/>
            <person name="Goble A."/>
            <person name="Goldman G.H."/>
            <person name="Gomi K."/>
            <person name="Griffith-Jones S."/>
            <person name="Gwilliam R."/>
            <person name="Haas B.J."/>
            <person name="Haas H."/>
            <person name="Harris D.E."/>
            <person name="Horiuchi H."/>
            <person name="Huang J."/>
            <person name="Humphray S."/>
            <person name="Jimenez J."/>
            <person name="Keller N."/>
            <person name="Khouri H."/>
            <person name="Kitamoto K."/>
            <person name="Kobayashi T."/>
            <person name="Konzack S."/>
            <person name="Kulkarni R."/>
            <person name="Kumagai T."/>
            <person name="Lafton A."/>
            <person name="Latge J.-P."/>
            <person name="Li W."/>
            <person name="Lord A."/>
            <person name="Lu C."/>
            <person name="Majoros W.H."/>
            <person name="May G.S."/>
            <person name="Miller B.L."/>
            <person name="Mohamoud Y."/>
            <person name="Molina M."/>
            <person name="Monod M."/>
            <person name="Mouyna I."/>
            <person name="Mulligan S."/>
            <person name="Murphy L.D."/>
            <person name="O'Neil S."/>
            <person name="Paulsen I."/>
            <person name="Penalva M.A."/>
            <person name="Pertea M."/>
            <person name="Price C."/>
            <person name="Pritchard B.L."/>
            <person name="Quail M.A."/>
            <person name="Rabbinowitsch E."/>
            <person name="Rawlins N."/>
            <person name="Rajandream M.A."/>
            <person name="Reichard U."/>
            <person name="Renauld H."/>
            <person name="Robson G.D."/>
            <person name="Rodriguez de Cordoba S."/>
            <person name="Rodriguez-Pena J.M."/>
            <person name="Ronning C.M."/>
            <person name="Rutter S."/>
            <person name="Salzberg S.L."/>
            <person name="Sanchez M."/>
            <person name="Sanchez-Ferrero J.C."/>
            <person name="Saunders D."/>
            <person name="Seeger K."/>
            <person name="Squares R."/>
            <person name="Squares S."/>
            <person name="Takeuchi M."/>
            <person name="Tekaia F."/>
            <person name="Turner G."/>
            <person name="Vazquez de Aldana C.R."/>
            <person name="Weidman J."/>
            <person name="White O."/>
            <person name="Woodward J.R."/>
            <person name="Yu J.-H."/>
            <person name="Fraser C.M."/>
            <person name="Galagan J.E."/>
            <person name="Asai K."/>
            <person name="Machida M."/>
            <person name="Hall N."/>
            <person name="Barrell B.G."/>
            <person name="Denning D.W."/>
        </authorList>
    </citation>
    <scope>NUCLEOTIDE SEQUENCE [LARGE SCALE GENOMIC DNA]</scope>
    <source>
        <strain>ATCC MYA-4609 / CBS 101355 / FGSC A1100 / Af293</strain>
    </source>
</reference>
<name>NDE1_ASPFU</name>
<protein>
    <recommendedName>
        <fullName>Nuclear distribution protein nudE homolog 1</fullName>
    </recommendedName>
</protein>
<proteinExistence type="inferred from homology"/>
<dbReference type="EMBL" id="AAHF01000001">
    <property type="protein sequence ID" value="EAL93165.1"/>
    <property type="molecule type" value="Genomic_DNA"/>
</dbReference>
<dbReference type="RefSeq" id="XP_755203.1">
    <property type="nucleotide sequence ID" value="XM_750110.1"/>
</dbReference>
<dbReference type="SMR" id="Q4X1V0"/>
<dbReference type="STRING" id="330879.Q4X1V0"/>
<dbReference type="EnsemblFungi" id="EAL93165">
    <property type="protein sequence ID" value="EAL93165"/>
    <property type="gene ID" value="AFUA_2G08690"/>
</dbReference>
<dbReference type="GeneID" id="3513634"/>
<dbReference type="KEGG" id="afm:AFUA_2G08690"/>
<dbReference type="VEuPathDB" id="FungiDB:Afu2g08690"/>
<dbReference type="eggNOG" id="KOG1853">
    <property type="taxonomic scope" value="Eukaryota"/>
</dbReference>
<dbReference type="HOGENOM" id="CLU_034391_0_0_1"/>
<dbReference type="InParanoid" id="Q4X1V0"/>
<dbReference type="OMA" id="NMAIERS"/>
<dbReference type="OrthoDB" id="5877028at2759"/>
<dbReference type="Proteomes" id="UP000002530">
    <property type="component" value="Chromosome 2"/>
</dbReference>
<dbReference type="GO" id="GO:0005737">
    <property type="term" value="C:cytoplasm"/>
    <property type="evidence" value="ECO:0007669"/>
    <property type="project" value="UniProtKB-KW"/>
</dbReference>
<dbReference type="GO" id="GO:0005871">
    <property type="term" value="C:kinesin complex"/>
    <property type="evidence" value="ECO:0000318"/>
    <property type="project" value="GO_Central"/>
</dbReference>
<dbReference type="GO" id="GO:0000776">
    <property type="term" value="C:kinetochore"/>
    <property type="evidence" value="ECO:0000318"/>
    <property type="project" value="GO_Central"/>
</dbReference>
<dbReference type="GO" id="GO:0005874">
    <property type="term" value="C:microtubule"/>
    <property type="evidence" value="ECO:0007669"/>
    <property type="project" value="UniProtKB-KW"/>
</dbReference>
<dbReference type="GO" id="GO:0008017">
    <property type="term" value="F:microtubule binding"/>
    <property type="evidence" value="ECO:0000318"/>
    <property type="project" value="GO_Central"/>
</dbReference>
<dbReference type="GO" id="GO:0051642">
    <property type="term" value="P:centrosome localization"/>
    <property type="evidence" value="ECO:0000318"/>
    <property type="project" value="GO_Central"/>
</dbReference>
<dbReference type="GO" id="GO:0007059">
    <property type="term" value="P:chromosome segregation"/>
    <property type="evidence" value="ECO:0000318"/>
    <property type="project" value="GO_Central"/>
</dbReference>
<dbReference type="GO" id="GO:0051303">
    <property type="term" value="P:establishment of chromosome localization"/>
    <property type="evidence" value="ECO:0000318"/>
    <property type="project" value="GO_Central"/>
</dbReference>
<dbReference type="GO" id="GO:0000132">
    <property type="term" value="P:establishment of mitotic spindle orientation"/>
    <property type="evidence" value="ECO:0000318"/>
    <property type="project" value="GO_Central"/>
</dbReference>
<dbReference type="GO" id="GO:0007020">
    <property type="term" value="P:microtubule nucleation"/>
    <property type="evidence" value="ECO:0000318"/>
    <property type="project" value="GO_Central"/>
</dbReference>
<dbReference type="GO" id="GO:0047496">
    <property type="term" value="P:vesicle transport along microtubule"/>
    <property type="evidence" value="ECO:0000318"/>
    <property type="project" value="GO_Central"/>
</dbReference>
<dbReference type="Gene3D" id="6.10.250.1080">
    <property type="match status" value="1"/>
</dbReference>
<dbReference type="InterPro" id="IPR033494">
    <property type="entry name" value="NUDE"/>
</dbReference>
<dbReference type="InterPro" id="IPR006964">
    <property type="entry name" value="NUDE_dom"/>
</dbReference>
<dbReference type="PANTHER" id="PTHR10921:SF1">
    <property type="entry name" value="NUCLEAR DISTRIBUTION PROTEIN NUDE HOMOLOG"/>
    <property type="match status" value="1"/>
</dbReference>
<dbReference type="PANTHER" id="PTHR10921">
    <property type="entry name" value="NUCLEAR DISTRIBUTION PROTEIN NUDE HOMOLOG 1"/>
    <property type="match status" value="1"/>
</dbReference>
<dbReference type="Pfam" id="PF04880">
    <property type="entry name" value="NUDE_C"/>
    <property type="match status" value="1"/>
</dbReference>
<keyword id="KW-0175">Coiled coil</keyword>
<keyword id="KW-0963">Cytoplasm</keyword>
<keyword id="KW-0206">Cytoskeleton</keyword>
<keyword id="KW-0493">Microtubule</keyword>
<keyword id="KW-1185">Reference proteome</keyword>
<keyword id="KW-0813">Transport</keyword>
<gene>
    <name type="primary">nde1</name>
    <name type="ORF">AFUA_2G08690</name>
</gene>
<comment type="function">
    <text evidence="1">Required for nuclear migration within hyphae during vegetative growth.</text>
</comment>
<comment type="subunit">
    <text evidence="1">Self-associates. Interacts with nudF (By similarity).</text>
</comment>
<comment type="subcellular location">
    <subcellularLocation>
        <location>Cytoplasm</location>
        <location>Cytoskeleton</location>
    </subcellularLocation>
    <text evidence="1">Localizes to the plus ends of microtubules.</text>
</comment>
<comment type="similarity">
    <text evidence="4">Belongs to the nudE family.</text>
</comment>
<accession>Q4X1V0</accession>